<reference key="1">
    <citation type="journal article" date="1995" name="Mol. Microbiol.">
        <title>Cloning and characterization of GPD2, a second gene encoding sn-glycerol 3-phosphate dehydrogenase (NAD+) in Saccharomyces cerevisiae, and its comparison with GPD1.</title>
        <authorList>
            <person name="Eriksson P."/>
            <person name="Andre L."/>
            <person name="Ansell R."/>
            <person name="Blomberg A."/>
            <person name="Adler L."/>
        </authorList>
    </citation>
    <scope>NUCLEOTIDE SEQUENCE [GENOMIC DNA]</scope>
    <scope>FUNCTION</scope>
</reference>
<reference key="2">
    <citation type="journal article" date="1996" name="Yeast">
        <title>Analysis of a 26 kb region on the left arm of yeast chromosome XV.</title>
        <authorList>
            <person name="Mannhaupt G."/>
            <person name="Vetter I."/>
            <person name="Schwarzlose C."/>
            <person name="Mitzel S."/>
            <person name="Feldmann H."/>
        </authorList>
    </citation>
    <scope>NUCLEOTIDE SEQUENCE [GENOMIC DNA]</scope>
    <source>
        <strain>ATCC 90843 / S288c / FY73</strain>
    </source>
</reference>
<reference key="3">
    <citation type="journal article" date="1997" name="Nature">
        <title>The nucleotide sequence of Saccharomyces cerevisiae chromosome XV.</title>
        <authorList>
            <person name="Dujon B."/>
            <person name="Albermann K."/>
            <person name="Aldea M."/>
            <person name="Alexandraki D."/>
            <person name="Ansorge W."/>
            <person name="Arino J."/>
            <person name="Benes V."/>
            <person name="Bohn C."/>
            <person name="Bolotin-Fukuhara M."/>
            <person name="Bordonne R."/>
            <person name="Boyer J."/>
            <person name="Camasses A."/>
            <person name="Casamayor A."/>
            <person name="Casas C."/>
            <person name="Cheret G."/>
            <person name="Cziepluch C."/>
            <person name="Daignan-Fornier B."/>
            <person name="Dang V.-D."/>
            <person name="de Haan M."/>
            <person name="Delius H."/>
            <person name="Durand P."/>
            <person name="Fairhead C."/>
            <person name="Feldmann H."/>
            <person name="Gaillon L."/>
            <person name="Galisson F."/>
            <person name="Gamo F.-J."/>
            <person name="Gancedo C."/>
            <person name="Goffeau A."/>
            <person name="Goulding S.E."/>
            <person name="Grivell L.A."/>
            <person name="Habbig B."/>
            <person name="Hand N.J."/>
            <person name="Hani J."/>
            <person name="Hattenhorst U."/>
            <person name="Hebling U."/>
            <person name="Hernando Y."/>
            <person name="Herrero E."/>
            <person name="Heumann K."/>
            <person name="Hiesel R."/>
            <person name="Hilger F."/>
            <person name="Hofmann B."/>
            <person name="Hollenberg C.P."/>
            <person name="Hughes B."/>
            <person name="Jauniaux J.-C."/>
            <person name="Kalogeropoulos A."/>
            <person name="Katsoulou C."/>
            <person name="Kordes E."/>
            <person name="Lafuente M.J."/>
            <person name="Landt O."/>
            <person name="Louis E.J."/>
            <person name="Maarse A.C."/>
            <person name="Madania A."/>
            <person name="Mannhaupt G."/>
            <person name="Marck C."/>
            <person name="Martin R.P."/>
            <person name="Mewes H.-W."/>
            <person name="Michaux G."/>
            <person name="Paces V."/>
            <person name="Parle-McDermott A.G."/>
            <person name="Pearson B.M."/>
            <person name="Perrin A."/>
            <person name="Pettersson B."/>
            <person name="Poch O."/>
            <person name="Pohl T.M."/>
            <person name="Poirey R."/>
            <person name="Portetelle D."/>
            <person name="Pujol A."/>
            <person name="Purnelle B."/>
            <person name="Ramezani Rad M."/>
            <person name="Rechmann S."/>
            <person name="Schwager C."/>
            <person name="Schweizer M."/>
            <person name="Sor F."/>
            <person name="Sterky F."/>
            <person name="Tarassov I.A."/>
            <person name="Teodoru C."/>
            <person name="Tettelin H."/>
            <person name="Thierry A."/>
            <person name="Tobiasch E."/>
            <person name="Tzermia M."/>
            <person name="Uhlen M."/>
            <person name="Unseld M."/>
            <person name="Valens M."/>
            <person name="Vandenbol M."/>
            <person name="Vetter I."/>
            <person name="Vlcek C."/>
            <person name="Voet M."/>
            <person name="Volckaert G."/>
            <person name="Voss H."/>
            <person name="Wambutt R."/>
            <person name="Wedler H."/>
            <person name="Wiemann S."/>
            <person name="Winsor B."/>
            <person name="Wolfe K.H."/>
            <person name="Zollner A."/>
            <person name="Zumstein E."/>
            <person name="Kleine K."/>
        </authorList>
    </citation>
    <scope>NUCLEOTIDE SEQUENCE [LARGE SCALE GENOMIC DNA]</scope>
    <source>
        <strain>ATCC 204508 / S288c</strain>
    </source>
</reference>
<reference key="4">
    <citation type="journal article" date="2014" name="G3 (Bethesda)">
        <title>The reference genome sequence of Saccharomyces cerevisiae: Then and now.</title>
        <authorList>
            <person name="Engel S.R."/>
            <person name="Dietrich F.S."/>
            <person name="Fisk D.G."/>
            <person name="Binkley G."/>
            <person name="Balakrishnan R."/>
            <person name="Costanzo M.C."/>
            <person name="Dwight S.S."/>
            <person name="Hitz B.C."/>
            <person name="Karra K."/>
            <person name="Nash R.S."/>
            <person name="Weng S."/>
            <person name="Wong E.D."/>
            <person name="Lloyd P."/>
            <person name="Skrzypek M.S."/>
            <person name="Miyasato S.R."/>
            <person name="Simison M."/>
            <person name="Cherry J.M."/>
        </authorList>
    </citation>
    <scope>GENOME REANNOTATION</scope>
    <source>
        <strain>ATCC 204508 / S288c</strain>
    </source>
</reference>
<reference key="5">
    <citation type="journal article" date="2007" name="Genome Res.">
        <title>Approaching a complete repository of sequence-verified protein-encoding clones for Saccharomyces cerevisiae.</title>
        <authorList>
            <person name="Hu Y."/>
            <person name="Rolfs A."/>
            <person name="Bhullar B."/>
            <person name="Murthy T.V.S."/>
            <person name="Zhu C."/>
            <person name="Berger M.F."/>
            <person name="Camargo A.A."/>
            <person name="Kelley F."/>
            <person name="McCarron S."/>
            <person name="Jepson D."/>
            <person name="Richardson A."/>
            <person name="Raphael J."/>
            <person name="Moreira D."/>
            <person name="Taycher E."/>
            <person name="Zuo D."/>
            <person name="Mohr S."/>
            <person name="Kane M.F."/>
            <person name="Williamson J."/>
            <person name="Simpson A.J.G."/>
            <person name="Bulyk M.L."/>
            <person name="Harlow E."/>
            <person name="Marsischky G."/>
            <person name="Kolodner R.D."/>
            <person name="LaBaer J."/>
        </authorList>
    </citation>
    <scope>NUCLEOTIDE SEQUENCE [GENOMIC DNA]</scope>
    <source>
        <strain>ATCC 204508 / S288c</strain>
    </source>
</reference>
<reference key="6">
    <citation type="journal article" date="1997" name="Appl. Environ. Microbiol.">
        <title>Physiological response to anaerobicity of glycerol-3-phosphate dehydrogenase mutants of Saccharomyces cerevisiae.</title>
        <authorList>
            <person name="Bjoerkqvist S."/>
            <person name="Ansell R."/>
            <person name="Adler L."/>
            <person name="Liden G."/>
        </authorList>
    </citation>
    <scope>FUNCTION</scope>
</reference>
<reference key="7">
    <citation type="journal article" date="1997" name="EMBO J.">
        <title>The two isoenzymes for yeast NAD+-dependent glycerol 3-phosphate dehydrogenase encoded by GPD1 and GPD2 have distinct roles in osmoadaptation and redox regulation.</title>
        <authorList>
            <person name="Ansell R."/>
            <person name="Granath K."/>
            <person name="Hohmann S."/>
            <person name="Thevelein J.M."/>
            <person name="Adler L."/>
        </authorList>
    </citation>
    <scope>INDUCTION</scope>
    <scope>DISRUPTION PHENOTYPE</scope>
    <scope>FUNCTION</scope>
    <scope>CATALYTIC ACTIVITY</scope>
    <scope>BIOPHYSICOCHEMICAL PROPERTIES</scope>
</reference>
<reference key="8">
    <citation type="journal article" date="2003" name="Nature">
        <title>Global analysis of protein localization in budding yeast.</title>
        <authorList>
            <person name="Huh W.-K."/>
            <person name="Falvo J.V."/>
            <person name="Gerke L.C."/>
            <person name="Carroll A.S."/>
            <person name="Howson R.W."/>
            <person name="Weissman J.S."/>
            <person name="O'Shea E.K."/>
        </authorList>
    </citation>
    <scope>SUBCELLULAR LOCATION [LARGE SCALE ANALYSIS]</scope>
</reference>
<reference key="9">
    <citation type="journal article" date="2003" name="Nature">
        <title>Global analysis of protein expression in yeast.</title>
        <authorList>
            <person name="Ghaemmaghami S."/>
            <person name="Huh W.-K."/>
            <person name="Bower K."/>
            <person name="Howson R.W."/>
            <person name="Belle A."/>
            <person name="Dephoure N."/>
            <person name="O'Shea E.K."/>
            <person name="Weissman J.S."/>
        </authorList>
    </citation>
    <scope>LEVEL OF PROTEIN EXPRESSION [LARGE SCALE ANALYSIS]</scope>
</reference>
<reference key="10">
    <citation type="journal article" date="2003" name="Proc. Natl. Acad. Sci. U.S.A.">
        <title>The proteome of Saccharomyces cerevisiae mitochondria.</title>
        <authorList>
            <person name="Sickmann A."/>
            <person name="Reinders J."/>
            <person name="Wagner Y."/>
            <person name="Joppich C."/>
            <person name="Zahedi R.P."/>
            <person name="Meyer H.E."/>
            <person name="Schoenfisch B."/>
            <person name="Perschil I."/>
            <person name="Chacinska A."/>
            <person name="Guiard B."/>
            <person name="Rehling P."/>
            <person name="Pfanner N."/>
            <person name="Meisinger C."/>
        </authorList>
    </citation>
    <scope>SUBCELLULAR LOCATION [LARGE SCALE ANALYSIS]</scope>
    <source>
        <strain>ATCC 76625 / YPH499</strain>
    </source>
</reference>
<reference key="11">
    <citation type="journal article" date="2004" name="J. Biol. Chem.">
        <title>Distinct intracellular localization of Gpd1p and Gpd2p, the two yeast isoforms of NAD+-dependent glycerol-3-phosphate dehydrogenase, explains their different contributions to redox-driven glycerol production.</title>
        <authorList>
            <person name="Valadi A."/>
            <person name="Granath K."/>
            <person name="Gustafsson L."/>
            <person name="Adler L."/>
        </authorList>
    </citation>
    <scope>SUBCELLULAR LOCATION</scope>
    <scope>INDUCTION</scope>
</reference>
<reference key="12">
    <citation type="journal article" date="2005" name="Mol. Cell. Proteomics">
        <title>Quantitative phosphoproteomics applied to the yeast pheromone signaling pathway.</title>
        <authorList>
            <person name="Gruhler A."/>
            <person name="Olsen J.V."/>
            <person name="Mohammed S."/>
            <person name="Mortensen P."/>
            <person name="Faergeman N.J."/>
            <person name="Mann M."/>
            <person name="Jensen O.N."/>
        </authorList>
    </citation>
    <scope>PHOSPHORYLATION [LARGE SCALE ANALYSIS] AT SER-72 AND SER-75</scope>
    <scope>IDENTIFICATION BY MASS SPECTROMETRY [LARGE SCALE ANALYSIS]</scope>
    <source>
        <strain>YAL6B</strain>
    </source>
</reference>
<reference key="13">
    <citation type="journal article" date="2007" name="J. Proteome Res.">
        <title>Large-scale phosphorylation analysis of alpha-factor-arrested Saccharomyces cerevisiae.</title>
        <authorList>
            <person name="Li X."/>
            <person name="Gerber S.A."/>
            <person name="Rudner A.D."/>
            <person name="Beausoleil S.A."/>
            <person name="Haas W."/>
            <person name="Villen J."/>
            <person name="Elias J.E."/>
            <person name="Gygi S.P."/>
        </authorList>
    </citation>
    <scope>PHOSPHORYLATION [LARGE SCALE ANALYSIS] AT SER-72 AND SER-75</scope>
    <scope>IDENTIFICATION BY MASS SPECTROMETRY [LARGE SCALE ANALYSIS]</scope>
    <source>
        <strain>ADR376</strain>
    </source>
</reference>
<reference key="14">
    <citation type="journal article" date="2007" name="Proc. Natl. Acad. Sci. U.S.A.">
        <title>Analysis of phosphorylation sites on proteins from Saccharomyces cerevisiae by electron transfer dissociation (ETD) mass spectrometry.</title>
        <authorList>
            <person name="Chi A."/>
            <person name="Huttenhower C."/>
            <person name="Geer L.Y."/>
            <person name="Coon J.J."/>
            <person name="Syka J.E.P."/>
            <person name="Bai D.L."/>
            <person name="Shabanowitz J."/>
            <person name="Burke D.J."/>
            <person name="Troyanskaya O.G."/>
            <person name="Hunt D.F."/>
        </authorList>
    </citation>
    <scope>PHOSPHORYLATION [LARGE SCALE ANALYSIS] AT SER-70; SER-72 AND SER-75</scope>
    <scope>IDENTIFICATION BY MASS SPECTROMETRY [LARGE SCALE ANALYSIS]</scope>
</reference>
<reference key="15">
    <citation type="journal article" date="2008" name="Mol. Cell. Proteomics">
        <title>A multidimensional chromatography technology for in-depth phosphoproteome analysis.</title>
        <authorList>
            <person name="Albuquerque C.P."/>
            <person name="Smolka M.B."/>
            <person name="Payne S.H."/>
            <person name="Bafna V."/>
            <person name="Eng J."/>
            <person name="Zhou H."/>
        </authorList>
    </citation>
    <scope>PHOSPHORYLATION [LARGE SCALE ANALYSIS] AT SER-72 AND SER-75</scope>
    <scope>IDENTIFICATION BY MASS SPECTROMETRY [LARGE SCALE ANALYSIS]</scope>
</reference>
<reference key="16">
    <citation type="journal article" date="2009" name="Science">
        <title>Global analysis of Cdk1 substrate phosphorylation sites provides insights into evolution.</title>
        <authorList>
            <person name="Holt L.J."/>
            <person name="Tuch B.B."/>
            <person name="Villen J."/>
            <person name="Johnson A.D."/>
            <person name="Gygi S.P."/>
            <person name="Morgan D.O."/>
        </authorList>
    </citation>
    <scope>PHOSPHORYLATION [LARGE SCALE ANALYSIS] AT SER-72 AND SER-75</scope>
    <scope>IDENTIFICATION BY MASS SPECTROMETRY [LARGE SCALE ANALYSIS]</scope>
</reference>
<evidence type="ECO:0000250" key="1">
    <source>
        <dbReference type="UniProtKB" id="P21695"/>
    </source>
</evidence>
<evidence type="ECO:0000255" key="2"/>
<evidence type="ECO:0000269" key="3">
    <source>
    </source>
</evidence>
<evidence type="ECO:0000269" key="4">
    <source>
    </source>
</evidence>
<evidence type="ECO:0000269" key="5">
    <source>
    </source>
</evidence>
<evidence type="ECO:0000269" key="6">
    <source>
    </source>
</evidence>
<evidence type="ECO:0000269" key="7">
    <source>
    </source>
</evidence>
<evidence type="ECO:0000303" key="8">
    <source>
    </source>
</evidence>
<evidence type="ECO:0000305" key="9"/>
<evidence type="ECO:0007744" key="10">
    <source>
    </source>
</evidence>
<evidence type="ECO:0007744" key="11">
    <source>
    </source>
</evidence>
<evidence type="ECO:0007744" key="12">
    <source>
    </source>
</evidence>
<evidence type="ECO:0007744" key="13">
    <source>
    </source>
</evidence>
<evidence type="ECO:0007744" key="14">
    <source>
    </source>
</evidence>
<accession>P41911</accession>
<accession>D6W208</accession>
<accession>P50905</accession>
<dbReference type="EC" id="1.1.1.8" evidence="7"/>
<dbReference type="EMBL" id="Z35169">
    <property type="protein sequence ID" value="CAA84532.1"/>
    <property type="status" value="ALT_FRAME"/>
    <property type="molecule type" value="Genomic_DNA"/>
</dbReference>
<dbReference type="EMBL" id="X91067">
    <property type="protein sequence ID" value="CAA62526.1"/>
    <property type="molecule type" value="Genomic_DNA"/>
</dbReference>
<dbReference type="EMBL" id="Z74801">
    <property type="protein sequence ID" value="CAA99068.1"/>
    <property type="molecule type" value="Genomic_DNA"/>
</dbReference>
<dbReference type="EMBL" id="AY558560">
    <property type="protein sequence ID" value="AAS56886.1"/>
    <property type="molecule type" value="Genomic_DNA"/>
</dbReference>
<dbReference type="EMBL" id="BK006948">
    <property type="protein sequence ID" value="DAA10724.1"/>
    <property type="molecule type" value="Genomic_DNA"/>
</dbReference>
<dbReference type="PIR" id="S61719">
    <property type="entry name" value="S61719"/>
</dbReference>
<dbReference type="RefSeq" id="NP_014582.1">
    <property type="nucleotide sequence ID" value="NM_001183314.1"/>
</dbReference>
<dbReference type="SMR" id="P41911"/>
<dbReference type="BioGRID" id="34342">
    <property type="interactions" value="143"/>
</dbReference>
<dbReference type="DIP" id="DIP-1348N"/>
<dbReference type="FunCoup" id="P41911">
    <property type="interactions" value="734"/>
</dbReference>
<dbReference type="IntAct" id="P41911">
    <property type="interactions" value="8"/>
</dbReference>
<dbReference type="MINT" id="P41911"/>
<dbReference type="STRING" id="4932.YOL059W"/>
<dbReference type="MoonProt" id="P41911"/>
<dbReference type="iPTMnet" id="P41911"/>
<dbReference type="PaxDb" id="4932-YOL059W"/>
<dbReference type="PeptideAtlas" id="P41911"/>
<dbReference type="EnsemblFungi" id="YOL059W_mRNA">
    <property type="protein sequence ID" value="YOL059W"/>
    <property type="gene ID" value="YOL059W"/>
</dbReference>
<dbReference type="GeneID" id="854095"/>
<dbReference type="KEGG" id="sce:YOL059W"/>
<dbReference type="AGR" id="SGD:S000005420"/>
<dbReference type="SGD" id="S000005420">
    <property type="gene designation" value="GPD2"/>
</dbReference>
<dbReference type="VEuPathDB" id="FungiDB:YOL059W"/>
<dbReference type="eggNOG" id="KOG2711">
    <property type="taxonomic scope" value="Eukaryota"/>
</dbReference>
<dbReference type="GeneTree" id="ENSGT00390000003114"/>
<dbReference type="HOGENOM" id="CLU_033449_2_4_1"/>
<dbReference type="InParanoid" id="P41911"/>
<dbReference type="OMA" id="NRMFGNM"/>
<dbReference type="OrthoDB" id="10263760at2759"/>
<dbReference type="BioCyc" id="YEAST:YOL059W-MONOMER"/>
<dbReference type="Reactome" id="R-SCE-1483166">
    <property type="pathway name" value="Synthesis of PA"/>
</dbReference>
<dbReference type="BioGRID-ORCS" id="854095">
    <property type="hits" value="0 hits in 10 CRISPR screens"/>
</dbReference>
<dbReference type="PRO" id="PR:P41911"/>
<dbReference type="Proteomes" id="UP000002311">
    <property type="component" value="Chromosome XV"/>
</dbReference>
<dbReference type="RNAct" id="P41911">
    <property type="molecule type" value="protein"/>
</dbReference>
<dbReference type="GO" id="GO:0005829">
    <property type="term" value="C:cytosol"/>
    <property type="evidence" value="ECO:0000318"/>
    <property type="project" value="GO_Central"/>
</dbReference>
<dbReference type="GO" id="GO:0005739">
    <property type="term" value="C:mitochondrion"/>
    <property type="evidence" value="ECO:0000314"/>
    <property type="project" value="SGD"/>
</dbReference>
<dbReference type="GO" id="GO:0005634">
    <property type="term" value="C:nucleus"/>
    <property type="evidence" value="ECO:0000318"/>
    <property type="project" value="GO_Central"/>
</dbReference>
<dbReference type="GO" id="GO:0141152">
    <property type="term" value="F:glycerol-3-phosphate dehydrogenase (NAD+) activity"/>
    <property type="evidence" value="ECO:0007669"/>
    <property type="project" value="UniProtKB-EC"/>
</dbReference>
<dbReference type="GO" id="GO:0047952">
    <property type="term" value="F:glycerol-3-phosphate dehydrogenase [NAD(P)+] activity"/>
    <property type="evidence" value="ECO:0000315"/>
    <property type="project" value="SGD"/>
</dbReference>
<dbReference type="GO" id="GO:0051287">
    <property type="term" value="F:NAD binding"/>
    <property type="evidence" value="ECO:0007669"/>
    <property type="project" value="InterPro"/>
</dbReference>
<dbReference type="GO" id="GO:0042803">
    <property type="term" value="F:protein homodimerization activity"/>
    <property type="evidence" value="ECO:0007669"/>
    <property type="project" value="InterPro"/>
</dbReference>
<dbReference type="GO" id="GO:0006071">
    <property type="term" value="P:glycerol metabolic process"/>
    <property type="evidence" value="ECO:0000315"/>
    <property type="project" value="SGD"/>
</dbReference>
<dbReference type="GO" id="GO:0046168">
    <property type="term" value="P:glycerol-3-phosphate catabolic process"/>
    <property type="evidence" value="ECO:0007669"/>
    <property type="project" value="InterPro"/>
</dbReference>
<dbReference type="GO" id="GO:0006072">
    <property type="term" value="P:glycerol-3-phosphate metabolic process"/>
    <property type="evidence" value="ECO:0000318"/>
    <property type="project" value="GO_Central"/>
</dbReference>
<dbReference type="FunFam" id="1.10.1040.10:FF:000004">
    <property type="entry name" value="Glycerol-3-phosphate dehydrogenase [NAD(+)]"/>
    <property type="match status" value="1"/>
</dbReference>
<dbReference type="FunFam" id="3.40.50.720:FF:000294">
    <property type="entry name" value="Glycerol-3-phosphate dehydrogenase [NAD(+)]"/>
    <property type="match status" value="1"/>
</dbReference>
<dbReference type="Gene3D" id="1.10.1040.10">
    <property type="entry name" value="N-(1-d-carboxylethyl)-l-norvaline Dehydrogenase, domain 2"/>
    <property type="match status" value="1"/>
</dbReference>
<dbReference type="Gene3D" id="3.40.50.720">
    <property type="entry name" value="NAD(P)-binding Rossmann-like Domain"/>
    <property type="match status" value="1"/>
</dbReference>
<dbReference type="InterPro" id="IPR008927">
    <property type="entry name" value="6-PGluconate_DH-like_C_sf"/>
</dbReference>
<dbReference type="InterPro" id="IPR013328">
    <property type="entry name" value="6PGD_dom2"/>
</dbReference>
<dbReference type="InterPro" id="IPR006168">
    <property type="entry name" value="G3P_DH_NAD-dep"/>
</dbReference>
<dbReference type="InterPro" id="IPR006109">
    <property type="entry name" value="G3P_DH_NAD-dep_C"/>
</dbReference>
<dbReference type="InterPro" id="IPR017751">
    <property type="entry name" value="G3P_DH_NAD-dep_euk"/>
</dbReference>
<dbReference type="InterPro" id="IPR011128">
    <property type="entry name" value="G3P_DH_NAD-dep_N"/>
</dbReference>
<dbReference type="InterPro" id="IPR036291">
    <property type="entry name" value="NAD(P)-bd_dom_sf"/>
</dbReference>
<dbReference type="NCBIfam" id="TIGR03376">
    <property type="entry name" value="glycerol3P_DH"/>
    <property type="match status" value="1"/>
</dbReference>
<dbReference type="PANTHER" id="PTHR11728">
    <property type="entry name" value="GLYCEROL-3-PHOSPHATE DEHYDROGENASE"/>
    <property type="match status" value="1"/>
</dbReference>
<dbReference type="PANTHER" id="PTHR11728:SF8">
    <property type="entry name" value="GLYCEROL-3-PHOSPHATE DEHYDROGENASE [NAD(+)]-RELATED"/>
    <property type="match status" value="1"/>
</dbReference>
<dbReference type="Pfam" id="PF07479">
    <property type="entry name" value="NAD_Gly3P_dh_C"/>
    <property type="match status" value="1"/>
</dbReference>
<dbReference type="Pfam" id="PF01210">
    <property type="entry name" value="NAD_Gly3P_dh_N"/>
    <property type="match status" value="1"/>
</dbReference>
<dbReference type="PRINTS" id="PR00077">
    <property type="entry name" value="GPDHDRGNASE"/>
</dbReference>
<dbReference type="SUPFAM" id="SSF48179">
    <property type="entry name" value="6-phosphogluconate dehydrogenase C-terminal domain-like"/>
    <property type="match status" value="1"/>
</dbReference>
<dbReference type="SUPFAM" id="SSF51735">
    <property type="entry name" value="NAD(P)-binding Rossmann-fold domains"/>
    <property type="match status" value="1"/>
</dbReference>
<dbReference type="PROSITE" id="PS00957">
    <property type="entry name" value="NAD_G3PDH"/>
    <property type="match status" value="1"/>
</dbReference>
<feature type="transit peptide" description="Mitochondrion" evidence="2">
    <location>
        <begin position="1"/>
        <end position="16"/>
    </location>
</feature>
<feature type="chain" id="PRO_0000043410" description="Glycerol-3-phosphate dehydrogenase [NAD(+)] 2, mitochondrial">
    <location>
        <begin position="17"/>
        <end position="440"/>
    </location>
</feature>
<feature type="active site" description="Proton acceptor" evidence="1">
    <location>
        <position position="294"/>
    </location>
</feature>
<feature type="binding site" evidence="1">
    <location>
        <begin position="90"/>
        <end position="95"/>
    </location>
    <ligand>
        <name>NAD(+)</name>
        <dbReference type="ChEBI" id="CHEBI:57540"/>
    </ligand>
</feature>
<feature type="binding site" evidence="1">
    <location>
        <position position="122"/>
    </location>
    <ligand>
        <name>NAD(+)</name>
        <dbReference type="ChEBI" id="CHEBI:57540"/>
    </ligand>
</feature>
<feature type="binding site" evidence="1">
    <location>
        <position position="178"/>
    </location>
    <ligand>
        <name>NAD(+)</name>
        <dbReference type="ChEBI" id="CHEBI:57540"/>
    </ligand>
</feature>
<feature type="binding site" evidence="1">
    <location>
        <position position="201"/>
    </location>
    <ligand>
        <name>substrate</name>
    </ligand>
</feature>
<feature type="binding site" evidence="1">
    <location>
        <position position="234"/>
    </location>
    <ligand>
        <name>NAD(+)</name>
        <dbReference type="ChEBI" id="CHEBI:57540"/>
    </ligand>
</feature>
<feature type="binding site" evidence="1">
    <location>
        <begin position="359"/>
        <end position="360"/>
    </location>
    <ligand>
        <name>substrate</name>
    </ligand>
</feature>
<feature type="binding site" evidence="1">
    <location>
        <position position="359"/>
    </location>
    <ligand>
        <name>NAD(+)</name>
        <dbReference type="ChEBI" id="CHEBI:57540"/>
    </ligand>
</feature>
<feature type="binding site" evidence="1">
    <location>
        <position position="388"/>
    </location>
    <ligand>
        <name>NAD(+)</name>
        <dbReference type="ChEBI" id="CHEBI:57540"/>
    </ligand>
</feature>
<feature type="modified residue" description="Phosphoserine" evidence="11">
    <location>
        <position position="70"/>
    </location>
</feature>
<feature type="modified residue" description="Phosphoserine" evidence="10 11 12 13 14">
    <location>
        <position position="72"/>
    </location>
</feature>
<feature type="modified residue" description="Phosphoserine" evidence="10 11 12 13 14">
    <location>
        <position position="75"/>
    </location>
</feature>
<keyword id="KW-0963">Cytoplasm</keyword>
<keyword id="KW-0496">Mitochondrion</keyword>
<keyword id="KW-0520">NAD</keyword>
<keyword id="KW-0560">Oxidoreductase</keyword>
<keyword id="KW-0597">Phosphoprotein</keyword>
<keyword id="KW-1185">Reference proteome</keyword>
<keyword id="KW-0809">Transit peptide</keyword>
<comment type="function">
    <text evidence="5 6 7">Catalyzes the production of glycerol under anaerobic growth conditions. Glycerol production serves as a redox sink by consuming the excess cytosolic NADH during anaerobic metabolism.</text>
</comment>
<comment type="catalytic activity">
    <reaction evidence="7">
        <text>sn-glycerol 3-phosphate + NAD(+) = dihydroxyacetone phosphate + NADH + H(+)</text>
        <dbReference type="Rhea" id="RHEA:11092"/>
        <dbReference type="ChEBI" id="CHEBI:15378"/>
        <dbReference type="ChEBI" id="CHEBI:57540"/>
        <dbReference type="ChEBI" id="CHEBI:57597"/>
        <dbReference type="ChEBI" id="CHEBI:57642"/>
        <dbReference type="ChEBI" id="CHEBI:57945"/>
        <dbReference type="EC" id="1.1.1.8"/>
    </reaction>
</comment>
<comment type="biophysicochemical properties">
    <kinetics>
        <KM evidence="7">0.018 mM for NADH</KM>
        <KM evidence="7">0.86 mM for dihydroxyacetone phosphate</KM>
    </kinetics>
</comment>
<comment type="subcellular location">
    <subcellularLocation>
        <location>Cytoplasm</location>
    </subcellularLocation>
    <subcellularLocation>
        <location>Mitochondrion</location>
    </subcellularLocation>
</comment>
<comment type="induction">
    <text evidence="4 7">By anaerobic growth conditions and other conditions leading to accumulation of cytosolic NADH.</text>
</comment>
<comment type="disruption phenotype">
    <text evidence="7">Leads to poor growth under anaerobic conditions (PubMed:9171333). Does not produce detectable glycerol, is highly osmosensitive and fails to grow under anoxic conditions, when GPD1 is also deleted (PubMed:9171333).</text>
</comment>
<comment type="miscellaneous">
    <text evidence="3">Present with 8966 molecules/cell in log phase SD medium.</text>
</comment>
<comment type="similarity">
    <text evidence="9">Belongs to the NAD-dependent glycerol-3-phosphate dehydrogenase family.</text>
</comment>
<comment type="caution">
    <text evidence="9">It is uncertain whether Met-1 or Met-49 is the initiator.</text>
</comment>
<comment type="sequence caution" evidence="9">
    <conflict type="frameshift">
        <sequence resource="EMBL-CDS" id="CAA84532"/>
    </conflict>
</comment>
<proteinExistence type="evidence at protein level"/>
<name>GPD2_YEAST</name>
<protein>
    <recommendedName>
        <fullName evidence="8">Glycerol-3-phosphate dehydrogenase [NAD(+)] 2, mitochondrial</fullName>
        <ecNumber evidence="7">1.1.1.8</ecNumber>
    </recommendedName>
</protein>
<sequence>MLAVRRLTRYTFLKRTHPVLYTRRAYKILPSRSTFLRRSLLQTQLHSKMTAHTNIKQHKHCHEDHPIRRSDSAVSIVHLKRAPFKVTVIGSGNWGTTIAKVIAENTELHSHIFEPEVRMWVFDEKIGDENLTDIINTRHQNVKYLPNIDLPHNLVADPDLLHSIKGADILVFNIPHQFLPNIVKQLQGHVAPHVRAISCLKGFELGSKGVQLLSSYVTDELGIQCGALSGANLAPEVAKEHWSETTVAYQLPKDYQGDGKDVDHKILKLLFHRPYFHVNVIDDVAGISIAGALKNVVALACGFVEGMGWGNNASAAIQRLGLGEIIKFGRMFFPESKVETYYQESAGVADLITTCSGGRNVKVATYMAKTGKSALEAEKELLNGQSAQGIITCREVHEWLQTCELTQEFPLFEAVYQIVYNNVRMEDLPEMIEELDIDDE</sequence>
<organism>
    <name type="scientific">Saccharomyces cerevisiae (strain ATCC 204508 / S288c)</name>
    <name type="common">Baker's yeast</name>
    <dbReference type="NCBI Taxonomy" id="559292"/>
    <lineage>
        <taxon>Eukaryota</taxon>
        <taxon>Fungi</taxon>
        <taxon>Dikarya</taxon>
        <taxon>Ascomycota</taxon>
        <taxon>Saccharomycotina</taxon>
        <taxon>Saccharomycetes</taxon>
        <taxon>Saccharomycetales</taxon>
        <taxon>Saccharomycetaceae</taxon>
        <taxon>Saccharomyces</taxon>
    </lineage>
</organism>
<gene>
    <name evidence="8" type="primary">GPD2</name>
    <name type="synonym">GPD3</name>
    <name type="ordered locus">YOL059W</name>
    <name type="ORF">O1222</name>
</gene>